<sequence>MKVEVMSSHRVHPEHKKASEETAILPVIDSWYCYWRTLAAIYLFDAYSGPELYTDLRQSLSKTLDDFPQLAGTLDNCNIQVEDKSGRSVRRTRVTWGGNTLGGEFIEAKTNARVRSLLPPSIQNISSFAWDRSDRTLRPLFPATLPETSGIRVQVTSFKCGGFGIALDMDHALADAHTVGLFIGHWSAIHTRMFTSTTTFPSQISLPNVMFNPQFVEKKVHETDNTYGSKMVMLDRARELPTRRPDLRDKSSQRTMQGNMFKPPPKPSAGVPYLLHFSASEYERITRGIQQATASPQITDQVAFVSFLWAALNKARARCSVGQAVDLHLPTSFRWTLGLPEGLIGSPLVAVMMDGGPDGEVCYTDPVVLATIITKTLERYTEDALLAIVYDASLRDSPASMLRGFERRERMEFTSGVGFGSDKLSFGCHSPVFVGPIILPVDNLFIMAEGMRTSEAHSSKWYKHGANIFVSLPQDVFRALLADPALINVELLGDI</sequence>
<dbReference type="EC" id="2.3.1.-" evidence="6"/>
<dbReference type="EMBL" id="FP929136">
    <property type="protein sequence ID" value="CBX99532.1"/>
    <property type="molecule type" value="Genomic_DNA"/>
</dbReference>
<dbReference type="RefSeq" id="XP_003843011.1">
    <property type="nucleotide sequence ID" value="XM_003842963.1"/>
</dbReference>
<dbReference type="SMR" id="E5A7D7"/>
<dbReference type="STRING" id="985895.E5A7D7"/>
<dbReference type="EnsemblFungi" id="CBX99532">
    <property type="protein sequence ID" value="CBX99532"/>
    <property type="gene ID" value="LEMA_P087710.1"/>
</dbReference>
<dbReference type="GeneID" id="13289263"/>
<dbReference type="VEuPathDB" id="FungiDB:LEMA_P087710.1"/>
<dbReference type="eggNOG" id="ENOG502RA8D">
    <property type="taxonomic scope" value="Eukaryota"/>
</dbReference>
<dbReference type="HOGENOM" id="CLU_560366_0_0_1"/>
<dbReference type="InParanoid" id="E5A7D7"/>
<dbReference type="OMA" id="RTIVKWG"/>
<dbReference type="OrthoDB" id="444127at2759"/>
<dbReference type="Proteomes" id="UP000002668">
    <property type="component" value="Genome"/>
</dbReference>
<dbReference type="GO" id="GO:0016747">
    <property type="term" value="F:acyltransferase activity, transferring groups other than amino-acyl groups"/>
    <property type="evidence" value="ECO:0007669"/>
    <property type="project" value="TreeGrafter"/>
</dbReference>
<dbReference type="GO" id="GO:0044550">
    <property type="term" value="P:secondary metabolite biosynthetic process"/>
    <property type="evidence" value="ECO:0007669"/>
    <property type="project" value="TreeGrafter"/>
</dbReference>
<dbReference type="Gene3D" id="3.30.559.10">
    <property type="entry name" value="Chloramphenicol acetyltransferase-like domain"/>
    <property type="match status" value="2"/>
</dbReference>
<dbReference type="InterPro" id="IPR023213">
    <property type="entry name" value="CAT-like_dom_sf"/>
</dbReference>
<dbReference type="InterPro" id="IPR050317">
    <property type="entry name" value="Plant_Fungal_Acyltransferase"/>
</dbReference>
<dbReference type="PANTHER" id="PTHR31642:SF310">
    <property type="entry name" value="FATTY ALCOHOL:CAFFEOYL-COA ACYLTRANSFERASE"/>
    <property type="match status" value="1"/>
</dbReference>
<dbReference type="PANTHER" id="PTHR31642">
    <property type="entry name" value="TRICHOTHECENE 3-O-ACETYLTRANSFERASE"/>
    <property type="match status" value="1"/>
</dbReference>
<dbReference type="Pfam" id="PF02458">
    <property type="entry name" value="Transferase"/>
    <property type="match status" value="1"/>
</dbReference>
<organism>
    <name type="scientific">Leptosphaeria maculans (strain JN3 / isolate v23.1.3 / race Av1-4-5-6-7-8)</name>
    <name type="common">Blackleg fungus</name>
    <name type="synonym">Phoma lingam</name>
    <dbReference type="NCBI Taxonomy" id="985895"/>
    <lineage>
        <taxon>Eukaryota</taxon>
        <taxon>Fungi</taxon>
        <taxon>Dikarya</taxon>
        <taxon>Ascomycota</taxon>
        <taxon>Pezizomycotina</taxon>
        <taxon>Dothideomycetes</taxon>
        <taxon>Pleosporomycetidae</taxon>
        <taxon>Pleosporales</taxon>
        <taxon>Pleosporineae</taxon>
        <taxon>Leptosphaeriaceae</taxon>
        <taxon>Plenodomus</taxon>
        <taxon>Plenodomus lingam/Leptosphaeria maculans species complex</taxon>
    </lineage>
</organism>
<accession>E5A7D7</accession>
<comment type="function">
    <text evidence="1 3">Acyltransferase; part of the gene cluster that mediates the biosynthesis of abscisic acid (ABA), a phytohormone that acts antagonistically toward salicylic acid (SA), jasmonic acid (JA) and ethylene (ETH) signaling, to impede plant defense responses (PubMed:31034868). The first step of the pathway catalyzes the reaction from farnesyl diphosphate to alpha-ionylideneethane performed by the alpha-ionylideneethane synthase abl3 via a three-step reaction mechanism involving 2 neutral intermediates, beta-farnesene and allofarnesene (By similarity). The cytochrome P450 monooxygenase abl1 might then be involved in the conversion of alpha-ionylideneethane to alpha-ionylideneacetic acid (By similarity). Alpha-ionylideneacetic acid is further converted to abscisic acid in 2 steps involving the cytochrome P450 monooxygenase abl2 and the short-chain dehydrogenase/reductase abl4, via the intermediates 1'-deoxy-ABA or 1',4'-trans-diol-ABA, depending on the order of action of these 2 enzymes (By similarity). Abl2 is responsible for the hydroxylation of carbon atom C-1' and abl4 might be involved in the oxidation of the C-4' carbon atom (By similarity). The acyltransferase abl6 seems not essential for the biosynthesis of ABA, but it may acetylate ABA as part of the synthesis of another ABA-related molecule (PubMed:31034868).</text>
</comment>
<comment type="induction">
    <text evidence="3">Expression is induced during the early biotrophic stage of development (PubMed:31034868). Expression is positively regulated by the ABA cluster-specific transcription regulator abl7 (PubMed:31034868).</text>
</comment>
<comment type="similarity">
    <text evidence="5">Belongs to the plant acyltransferase family.</text>
</comment>
<proteinExistence type="evidence at transcript level"/>
<feature type="chain" id="PRO_0000448426" description="Acyltransferase abl6">
    <location>
        <begin position="1"/>
        <end position="495"/>
    </location>
</feature>
<feature type="active site" description="Proton acceptor" evidence="2">
    <location>
        <position position="171"/>
    </location>
</feature>
<protein>
    <recommendedName>
        <fullName evidence="4">Acyltransferase abl6</fullName>
        <ecNumber evidence="6">2.3.1.-</ecNumber>
    </recommendedName>
    <alternativeName>
        <fullName evidence="4">Abscisic acid biosynthesis cluster protein 6</fullName>
    </alternativeName>
</protein>
<evidence type="ECO:0000250" key="1">
    <source>
        <dbReference type="UniProtKB" id="Q6H9H9"/>
    </source>
</evidence>
<evidence type="ECO:0000250" key="2">
    <source>
        <dbReference type="UniProtKB" id="Q8W1W9"/>
    </source>
</evidence>
<evidence type="ECO:0000269" key="3">
    <source>
    </source>
</evidence>
<evidence type="ECO:0000303" key="4">
    <source>
    </source>
</evidence>
<evidence type="ECO:0000305" key="5"/>
<evidence type="ECO:0000305" key="6">
    <source>
    </source>
</evidence>
<name>ABL6_LEPMJ</name>
<keyword id="KW-1185">Reference proteome</keyword>
<keyword id="KW-0808">Transferase</keyword>
<reference key="1">
    <citation type="journal article" date="2011" name="Nat. Commun.">
        <title>Effector diversification within compartments of the Leptosphaeria maculans genome affected by Repeat-Induced Point mutations.</title>
        <authorList>
            <person name="Rouxel T."/>
            <person name="Grandaubert J."/>
            <person name="Hane J.K."/>
            <person name="Hoede C."/>
            <person name="van de Wouw A.P."/>
            <person name="Couloux A."/>
            <person name="Dominguez V."/>
            <person name="Anthouard V."/>
            <person name="Bally P."/>
            <person name="Bourras S."/>
            <person name="Cozijnsen A.J."/>
            <person name="Ciuffetti L.M."/>
            <person name="Degrave A."/>
            <person name="Dilmaghani A."/>
            <person name="Duret L."/>
            <person name="Fudal I."/>
            <person name="Goodwin S.B."/>
            <person name="Gout L."/>
            <person name="Glaser N."/>
            <person name="Linglin J."/>
            <person name="Kema G.H.J."/>
            <person name="Lapalu N."/>
            <person name="Lawrence C.B."/>
            <person name="May K."/>
            <person name="Meyer M."/>
            <person name="Ollivier B."/>
            <person name="Poulain J."/>
            <person name="Schoch C.L."/>
            <person name="Simon A."/>
            <person name="Spatafora J.W."/>
            <person name="Stachowiak A."/>
            <person name="Turgeon B.G."/>
            <person name="Tyler B.M."/>
            <person name="Vincent D."/>
            <person name="Weissenbach J."/>
            <person name="Amselem J."/>
            <person name="Quesneville H."/>
            <person name="Oliver R.P."/>
            <person name="Wincker P."/>
            <person name="Balesdent M.-H."/>
            <person name="Howlett B.J."/>
        </authorList>
    </citation>
    <scope>NUCLEOTIDE SEQUENCE [LARGE SCALE GENOMIC DNA]</scope>
    <source>
        <strain>JN3 / isolate v23.1.3 / race Av1-4-5-6-7-8</strain>
    </source>
</reference>
<reference key="2">
    <citation type="journal article" date="2019" name="Fungal Genet. Biol.">
        <title>Identification of a gene cluster for the synthesis of the plant hormone abscisic acid in the plant pathogen Leptosphaeria maculans.</title>
        <authorList>
            <person name="Darma R."/>
            <person name="Lutz A."/>
            <person name="Elliott C.E."/>
            <person name="Idnurm A."/>
        </authorList>
    </citation>
    <scope>IDENTIFICATION</scope>
    <scope>INDUCTION</scope>
    <scope>FUNCTION</scope>
</reference>
<gene>
    <name evidence="4" type="primary">abl6</name>
    <name type="ORF">LEMA_P087710.1</name>
</gene>